<reference key="1">
    <citation type="journal article" date="2010" name="J. Proteome Res.">
        <title>Molecular diversification of peptide toxins from the tarantula Haplopelma hainanum (Ornithoctonus hainana) venom based on transcriptomic, peptidomic, and genomic analyses.</title>
        <authorList>
            <person name="Tang X."/>
            <person name="Zhang Y."/>
            <person name="Hu W."/>
            <person name="Xu D."/>
            <person name="Tao H."/>
            <person name="Yang X."/>
            <person name="Li Y."/>
            <person name="Jiang L."/>
            <person name="Liang S."/>
        </authorList>
    </citation>
    <scope>NUCLEOTIDE SEQUENCE [LARGE SCALE MRNA]</scope>
    <source>
        <tissue>Venom gland</tissue>
    </source>
</reference>
<evidence type="ECO:0000250" key="1"/>
<evidence type="ECO:0000255" key="2"/>
<evidence type="ECO:0000256" key="3">
    <source>
        <dbReference type="SAM" id="MobiDB-lite"/>
    </source>
</evidence>
<evidence type="ECO:0000305" key="4"/>
<keyword id="KW-1015">Disulfide bond</keyword>
<keyword id="KW-0872">Ion channel impairing toxin</keyword>
<keyword id="KW-0960">Knottin</keyword>
<keyword id="KW-0964">Secreted</keyword>
<keyword id="KW-0732">Signal</keyword>
<keyword id="KW-0800">Toxin</keyword>
<proteinExistence type="evidence at transcript level"/>
<sequence>MNTVRVTFLLVFVLAVSLGQADKDENRMEMQEKTEQGKSYLDFAENLLLQKLEELEAKLLEEDSEESRNSRQKRCIGEGVPCDENDPRCCSGLVCLKPTLHGIWYKSYYCCKK</sequence>
<name>H16S1_CYRHA</name>
<accession>D2Y289</accession>
<protein>
    <recommendedName>
        <fullName>U11-theraphotoxin-Hhn1s</fullName>
        <shortName>U11-TRTX-Hhn1s</shortName>
    </recommendedName>
    <alternativeName>
        <fullName>Hainantoxin-XVI-19</fullName>
        <shortName>HNTX-XVI-19</shortName>
    </alternativeName>
</protein>
<feature type="signal peptide" evidence="2">
    <location>
        <begin position="1"/>
        <end position="21"/>
    </location>
</feature>
<feature type="propeptide" id="PRO_0000400953" evidence="1">
    <location>
        <begin position="22"/>
        <end position="74"/>
    </location>
</feature>
<feature type="peptide" id="PRO_0000400954" description="U11-theraphotoxin-Hhn1s">
    <location>
        <begin position="75"/>
        <end position="113"/>
    </location>
</feature>
<feature type="region of interest" description="Disordered" evidence="3">
    <location>
        <begin position="61"/>
        <end position="83"/>
    </location>
</feature>
<feature type="disulfide bond" evidence="1">
    <location>
        <begin position="75"/>
        <end position="90"/>
    </location>
</feature>
<feature type="disulfide bond" evidence="1">
    <location>
        <begin position="82"/>
        <end position="95"/>
    </location>
</feature>
<feature type="disulfide bond" evidence="1">
    <location>
        <begin position="89"/>
        <end position="110"/>
    </location>
</feature>
<organism>
    <name type="scientific">Cyriopagopus hainanus</name>
    <name type="common">Chinese bird spider</name>
    <name type="synonym">Haplopelma hainanum</name>
    <dbReference type="NCBI Taxonomy" id="209901"/>
    <lineage>
        <taxon>Eukaryota</taxon>
        <taxon>Metazoa</taxon>
        <taxon>Ecdysozoa</taxon>
        <taxon>Arthropoda</taxon>
        <taxon>Chelicerata</taxon>
        <taxon>Arachnida</taxon>
        <taxon>Araneae</taxon>
        <taxon>Mygalomorphae</taxon>
        <taxon>Theraphosidae</taxon>
        <taxon>Haplopelma</taxon>
    </lineage>
</organism>
<comment type="function">
    <text evidence="1">Probable ion channel inhibitor.</text>
</comment>
<comment type="subcellular location">
    <subcellularLocation>
        <location evidence="1">Secreted</location>
    </subcellularLocation>
</comment>
<comment type="tissue specificity">
    <text>Expressed by the venom gland.</text>
</comment>
<comment type="domain">
    <text evidence="1">The presence of a 'disulfide through disulfide knot' structurally defines this protein as a knottin.</text>
</comment>
<comment type="similarity">
    <text evidence="4">Belongs to the neurotoxin 14 (magi-1) family. 01 (HNTX-16) subfamily.</text>
</comment>
<dbReference type="EMBL" id="GU292966">
    <property type="protein sequence ID" value="ADB56782.1"/>
    <property type="molecule type" value="mRNA"/>
</dbReference>
<dbReference type="SMR" id="D2Y289"/>
<dbReference type="ArachnoServer" id="AS002040">
    <property type="toxin name" value="U11-theraphotoxin-Hhn1s"/>
</dbReference>
<dbReference type="GO" id="GO:0005576">
    <property type="term" value="C:extracellular region"/>
    <property type="evidence" value="ECO:0007669"/>
    <property type="project" value="UniProtKB-SubCell"/>
</dbReference>
<dbReference type="GO" id="GO:0019871">
    <property type="term" value="F:sodium channel inhibitor activity"/>
    <property type="evidence" value="ECO:0007669"/>
    <property type="project" value="InterPro"/>
</dbReference>
<dbReference type="GO" id="GO:0090729">
    <property type="term" value="F:toxin activity"/>
    <property type="evidence" value="ECO:0007669"/>
    <property type="project" value="UniProtKB-KW"/>
</dbReference>
<dbReference type="InterPro" id="IPR012627">
    <property type="entry name" value="Toxin_22"/>
</dbReference>
<dbReference type="Pfam" id="PF08092">
    <property type="entry name" value="Toxin_22"/>
    <property type="match status" value="1"/>
</dbReference>